<comment type="function">
    <text evidence="1">Is required not only for elongation of protein synthesis but also for the initiation of all mRNA translation through initiator tRNA(fMet) aminoacylation.</text>
</comment>
<comment type="catalytic activity">
    <reaction>
        <text>tRNA(Met) + L-methionine + ATP = L-methionyl-tRNA(Met) + AMP + diphosphate</text>
        <dbReference type="Rhea" id="RHEA:13481"/>
        <dbReference type="Rhea" id="RHEA-COMP:9667"/>
        <dbReference type="Rhea" id="RHEA-COMP:9698"/>
        <dbReference type="ChEBI" id="CHEBI:30616"/>
        <dbReference type="ChEBI" id="CHEBI:33019"/>
        <dbReference type="ChEBI" id="CHEBI:57844"/>
        <dbReference type="ChEBI" id="CHEBI:78442"/>
        <dbReference type="ChEBI" id="CHEBI:78530"/>
        <dbReference type="ChEBI" id="CHEBI:456215"/>
        <dbReference type="EC" id="6.1.1.10"/>
    </reaction>
</comment>
<comment type="cofactor">
    <cofactor evidence="1">
        <name>Zn(2+)</name>
        <dbReference type="ChEBI" id="CHEBI:29105"/>
    </cofactor>
    <text evidence="1">Binds 1 zinc ion per subunit.</text>
</comment>
<comment type="subunit">
    <text evidence="1">Homodimer.</text>
</comment>
<comment type="subcellular location">
    <subcellularLocation>
        <location evidence="1">Cytoplasm</location>
    </subcellularLocation>
</comment>
<comment type="similarity">
    <text evidence="3">Belongs to the class-I aminoacyl-tRNA synthetase family. MetG type 1 subfamily.</text>
</comment>
<gene>
    <name type="primary">metG</name>
    <name type="ordered locus">NEQ457</name>
</gene>
<feature type="chain" id="PRO_0000139192" description="Methionine--tRNA ligase">
    <location>
        <begin position="1"/>
        <end position="776"/>
    </location>
</feature>
<feature type="domain" description="tRNA-binding" evidence="2">
    <location>
        <begin position="676"/>
        <end position="776"/>
    </location>
</feature>
<feature type="short sequence motif" description="'HIGH' region">
    <location>
        <begin position="10"/>
        <end position="20"/>
    </location>
</feature>
<feature type="short sequence motif" description="'KMSKS' region">
    <location>
        <begin position="375"/>
        <end position="379"/>
    </location>
</feature>
<feature type="binding site" evidence="1">
    <location>
        <position position="143"/>
    </location>
    <ligand>
        <name>Zn(2+)</name>
        <dbReference type="ChEBI" id="CHEBI:29105"/>
    </ligand>
</feature>
<feature type="binding site" evidence="1">
    <location>
        <position position="146"/>
    </location>
    <ligand>
        <name>Zn(2+)</name>
        <dbReference type="ChEBI" id="CHEBI:29105"/>
    </ligand>
</feature>
<feature type="binding site" evidence="1">
    <location>
        <position position="156"/>
    </location>
    <ligand>
        <name>Zn(2+)</name>
        <dbReference type="ChEBI" id="CHEBI:29105"/>
    </ligand>
</feature>
<feature type="binding site" evidence="1">
    <location>
        <position position="159"/>
    </location>
    <ligand>
        <name>Zn(2+)</name>
        <dbReference type="ChEBI" id="CHEBI:29105"/>
    </ligand>
</feature>
<feature type="binding site" evidence="1">
    <location>
        <position position="378"/>
    </location>
    <ligand>
        <name>ATP</name>
        <dbReference type="ChEBI" id="CHEBI:30616"/>
    </ligand>
</feature>
<feature type="helix" evidence="4">
    <location>
        <begin position="674"/>
        <end position="678"/>
    </location>
</feature>
<feature type="strand" evidence="4">
    <location>
        <begin position="682"/>
        <end position="692"/>
    </location>
</feature>
<feature type="strand" evidence="4">
    <location>
        <begin position="700"/>
        <end position="705"/>
    </location>
</feature>
<feature type="strand" evidence="4">
    <location>
        <begin position="710"/>
        <end position="716"/>
    </location>
</feature>
<feature type="turn" evidence="4">
    <location>
        <begin position="718"/>
        <end position="720"/>
    </location>
</feature>
<feature type="helix" evidence="4">
    <location>
        <begin position="723"/>
        <end position="726"/>
    </location>
</feature>
<feature type="strand" evidence="4">
    <location>
        <begin position="730"/>
        <end position="737"/>
    </location>
</feature>
<feature type="strand" evidence="4">
    <location>
        <begin position="740"/>
        <end position="742"/>
    </location>
</feature>
<feature type="strand" evidence="4">
    <location>
        <begin position="745"/>
        <end position="747"/>
    </location>
</feature>
<feature type="strand" evidence="4">
    <location>
        <begin position="753"/>
        <end position="755"/>
    </location>
</feature>
<feature type="strand" evidence="4">
    <location>
        <begin position="760"/>
        <end position="767"/>
    </location>
</feature>
<feature type="strand" evidence="4">
    <location>
        <begin position="774"/>
        <end position="776"/>
    </location>
</feature>
<reference key="1">
    <citation type="journal article" date="2003" name="Proc. Natl. Acad. Sci. U.S.A.">
        <title>The genome of Nanoarchaeum equitans: insights into early archaeal evolution and derived parasitism.</title>
        <authorList>
            <person name="Waters E."/>
            <person name="Hohn M.J."/>
            <person name="Ahel I."/>
            <person name="Graham D.E."/>
            <person name="Adams M.D."/>
            <person name="Barnstead M."/>
            <person name="Beeson K.Y."/>
            <person name="Bibbs L."/>
            <person name="Bolanos R."/>
            <person name="Keller M."/>
            <person name="Kretz K."/>
            <person name="Lin X."/>
            <person name="Mathur E."/>
            <person name="Ni J."/>
            <person name="Podar M."/>
            <person name="Richardson T."/>
            <person name="Sutton G.G."/>
            <person name="Simon M."/>
            <person name="Soell D."/>
            <person name="Stetter K.O."/>
            <person name="Short J.M."/>
            <person name="Noorderwier M."/>
        </authorList>
    </citation>
    <scope>NUCLEOTIDE SEQUENCE [LARGE SCALE GENOMIC DNA]</scope>
    <source>
        <strain>Kin4-M</strain>
    </source>
</reference>
<proteinExistence type="evidence at protein level"/>
<protein>
    <recommendedName>
        <fullName>Methionine--tRNA ligase</fullName>
        <ecNumber>6.1.1.10</ecNumber>
    </recommendedName>
    <alternativeName>
        <fullName>Methionyl-tRNA synthetase</fullName>
        <shortName>MetRS</shortName>
    </alternativeName>
</protein>
<sequence>MRILVTAALPYSNGPIHLGHIAGAYLPADIFYRFVKLKGYNALYICGSDQYGSPIELNAIKLNIDPKDYASFYRKIQEEIFKKFNIKFDIYSGTAESNIHPIIVKEFFLSLFSAGLLIEKEQELPYDPKIKRFLPDRFVVGQCPYCGYEKAYGDQCEKCGRLLEPKELINPKSAITGEKVIFKKTRHLFFNIPKLKDKLKQYIESKKDVWNDFTYSWSLALLDNFKERAITRDNKWGVKVPAKEMLEILKKALKEGKTPKDFGLLIDSTNEKDLENHIKEYENKVLYVWFDAPIGYISFTFETSPEYRYYWDEKEKPYIVHFIGKDNIPFHTIFWPALIIGRNLGYKNINHILDFDIALPYQVFGNPYLNYYGKKFSKSKRWGVFLDNIDKIDIDIDYFRFYLAYIHTVSKDMSFEWDQFKEVINKELVDNIGNFIHRVLTFIYNRFNGIPPKIEHLDDKDKELLDKIKQLPEKVFNFIWKGEIGNALREIVNTSNLANKYFQEKEPWKTNDPNTIAIAFEAVKTFIILLYPFIPEKAKLLASIANIDIKWDFNQKVEKINKPFIVFHKLSDNQIEMAKQILTNPKEYDLGKKKVIGVLRYEDELYKIELECDDNPWVCLKRELDKRKIKYIYDTVKGDVPPHIIDGNTYIYLLPALEKPNLEKAEEEYGLVSYLDFAKLDMRVGKIIDVQDHPNADKLYIIKVSLGNKQKTLVGGLKQYYKKEELIGKYVVLINNLKPKQLRGITSEGMLLAADDGKEVALLMPDKPISLGSKVR</sequence>
<organism>
    <name type="scientific">Nanoarchaeum equitans (strain Kin4-M)</name>
    <dbReference type="NCBI Taxonomy" id="228908"/>
    <lineage>
        <taxon>Archaea</taxon>
        <taxon>Nanobdellota</taxon>
        <taxon>Candidatus Nanoarchaeia</taxon>
        <taxon>Nanoarchaeales</taxon>
        <taxon>Nanoarchaeaceae</taxon>
        <taxon>Nanoarchaeum</taxon>
    </lineage>
</organism>
<keyword id="KW-0002">3D-structure</keyword>
<keyword id="KW-0030">Aminoacyl-tRNA synthetase</keyword>
<keyword id="KW-0067">ATP-binding</keyword>
<keyword id="KW-0963">Cytoplasm</keyword>
<keyword id="KW-0436">Ligase</keyword>
<keyword id="KW-0479">Metal-binding</keyword>
<keyword id="KW-0547">Nucleotide-binding</keyword>
<keyword id="KW-0648">Protein biosynthesis</keyword>
<keyword id="KW-1185">Reference proteome</keyword>
<keyword id="KW-0694">RNA-binding</keyword>
<keyword id="KW-0820">tRNA-binding</keyword>
<keyword id="KW-0862">Zinc</keyword>
<dbReference type="EC" id="6.1.1.10"/>
<dbReference type="EMBL" id="AE017199">
    <property type="protein sequence ID" value="AAR39300.1"/>
    <property type="molecule type" value="Genomic_DNA"/>
</dbReference>
<dbReference type="PDB" id="5H34">
    <property type="method" value="X-ray"/>
    <property type="resolution" value="1.75 A"/>
    <property type="chains" value="A/B=663-776"/>
</dbReference>
<dbReference type="PDBsum" id="5H34"/>
<dbReference type="SMR" id="Q74MZ1"/>
<dbReference type="STRING" id="228908.NEQ457"/>
<dbReference type="EnsemblBacteria" id="AAR39300">
    <property type="protein sequence ID" value="AAR39300"/>
    <property type="gene ID" value="NEQ457"/>
</dbReference>
<dbReference type="KEGG" id="neq:NEQ457"/>
<dbReference type="PATRIC" id="fig|228908.8.peg.470"/>
<dbReference type="HOGENOM" id="CLU_009710_1_2_2"/>
<dbReference type="BRENDA" id="6.1.1.10">
    <property type="organism ID" value="8261"/>
</dbReference>
<dbReference type="Proteomes" id="UP000000578">
    <property type="component" value="Chromosome"/>
</dbReference>
<dbReference type="GO" id="GO:0017101">
    <property type="term" value="C:aminoacyl-tRNA synthetase multienzyme complex"/>
    <property type="evidence" value="ECO:0007669"/>
    <property type="project" value="TreeGrafter"/>
</dbReference>
<dbReference type="GO" id="GO:0005829">
    <property type="term" value="C:cytosol"/>
    <property type="evidence" value="ECO:0007669"/>
    <property type="project" value="TreeGrafter"/>
</dbReference>
<dbReference type="GO" id="GO:0005524">
    <property type="term" value="F:ATP binding"/>
    <property type="evidence" value="ECO:0007669"/>
    <property type="project" value="UniProtKB-KW"/>
</dbReference>
<dbReference type="GO" id="GO:0046872">
    <property type="term" value="F:metal ion binding"/>
    <property type="evidence" value="ECO:0007669"/>
    <property type="project" value="UniProtKB-KW"/>
</dbReference>
<dbReference type="GO" id="GO:0004825">
    <property type="term" value="F:methionine-tRNA ligase activity"/>
    <property type="evidence" value="ECO:0007669"/>
    <property type="project" value="UniProtKB-EC"/>
</dbReference>
<dbReference type="GO" id="GO:0000049">
    <property type="term" value="F:tRNA binding"/>
    <property type="evidence" value="ECO:0007669"/>
    <property type="project" value="UniProtKB-KW"/>
</dbReference>
<dbReference type="GO" id="GO:0006431">
    <property type="term" value="P:methionyl-tRNA aminoacylation"/>
    <property type="evidence" value="ECO:0007669"/>
    <property type="project" value="InterPro"/>
</dbReference>
<dbReference type="CDD" id="cd07957">
    <property type="entry name" value="Anticodon_Ia_Met"/>
    <property type="match status" value="1"/>
</dbReference>
<dbReference type="CDD" id="cd02798">
    <property type="entry name" value="tRNA_bind_CsaA"/>
    <property type="match status" value="1"/>
</dbReference>
<dbReference type="FunFam" id="2.20.28.20:FF:000001">
    <property type="entry name" value="Methionine--tRNA ligase"/>
    <property type="match status" value="1"/>
</dbReference>
<dbReference type="FunFam" id="2.40.50.140:FF:000042">
    <property type="entry name" value="Methionine--tRNA ligase"/>
    <property type="match status" value="1"/>
</dbReference>
<dbReference type="Gene3D" id="3.40.50.620">
    <property type="entry name" value="HUPs"/>
    <property type="match status" value="1"/>
</dbReference>
<dbReference type="Gene3D" id="1.10.730.10">
    <property type="entry name" value="Isoleucyl-tRNA Synthetase, Domain 1"/>
    <property type="match status" value="1"/>
</dbReference>
<dbReference type="Gene3D" id="2.20.28.20">
    <property type="entry name" value="Methionyl-tRNA synthetase, Zn-domain"/>
    <property type="match status" value="1"/>
</dbReference>
<dbReference type="Gene3D" id="2.40.50.140">
    <property type="entry name" value="Nucleic acid-binding proteins"/>
    <property type="match status" value="1"/>
</dbReference>
<dbReference type="InterPro" id="IPR001412">
    <property type="entry name" value="aa-tRNA-synth_I_CS"/>
</dbReference>
<dbReference type="InterPro" id="IPR041872">
    <property type="entry name" value="Anticodon_Met"/>
</dbReference>
<dbReference type="InterPro" id="IPR023458">
    <property type="entry name" value="Met-tRNA_ligase_1"/>
</dbReference>
<dbReference type="InterPro" id="IPR015413">
    <property type="entry name" value="Methionyl/Leucyl_tRNA_Synth"/>
</dbReference>
<dbReference type="InterPro" id="IPR033911">
    <property type="entry name" value="MetRS_core"/>
</dbReference>
<dbReference type="InterPro" id="IPR029038">
    <property type="entry name" value="MetRS_Zn"/>
</dbReference>
<dbReference type="InterPro" id="IPR012340">
    <property type="entry name" value="NA-bd_OB-fold"/>
</dbReference>
<dbReference type="InterPro" id="IPR014729">
    <property type="entry name" value="Rossmann-like_a/b/a_fold"/>
</dbReference>
<dbReference type="InterPro" id="IPR002547">
    <property type="entry name" value="tRNA-bd_dom"/>
</dbReference>
<dbReference type="InterPro" id="IPR009080">
    <property type="entry name" value="tRNAsynth_Ia_anticodon-bd"/>
</dbReference>
<dbReference type="NCBIfam" id="NF001100">
    <property type="entry name" value="PRK00133.1"/>
    <property type="match status" value="1"/>
</dbReference>
<dbReference type="PANTHER" id="PTHR45765">
    <property type="entry name" value="METHIONINE--TRNA LIGASE"/>
    <property type="match status" value="1"/>
</dbReference>
<dbReference type="PANTHER" id="PTHR45765:SF1">
    <property type="entry name" value="METHIONINE--TRNA LIGASE, CYTOPLASMIC"/>
    <property type="match status" value="1"/>
</dbReference>
<dbReference type="Pfam" id="PF09334">
    <property type="entry name" value="tRNA-synt_1g"/>
    <property type="match status" value="2"/>
</dbReference>
<dbReference type="Pfam" id="PF01588">
    <property type="entry name" value="tRNA_bind"/>
    <property type="match status" value="1"/>
</dbReference>
<dbReference type="PRINTS" id="PR01041">
    <property type="entry name" value="TRNASYNTHMET"/>
</dbReference>
<dbReference type="SUPFAM" id="SSF47323">
    <property type="entry name" value="Anticodon-binding domain of a subclass of class I aminoacyl-tRNA synthetases"/>
    <property type="match status" value="1"/>
</dbReference>
<dbReference type="SUPFAM" id="SSF57770">
    <property type="entry name" value="Methionyl-tRNA synthetase (MetRS), Zn-domain"/>
    <property type="match status" value="1"/>
</dbReference>
<dbReference type="SUPFAM" id="SSF50249">
    <property type="entry name" value="Nucleic acid-binding proteins"/>
    <property type="match status" value="1"/>
</dbReference>
<dbReference type="SUPFAM" id="SSF52374">
    <property type="entry name" value="Nucleotidylyl transferase"/>
    <property type="match status" value="1"/>
</dbReference>
<dbReference type="PROSITE" id="PS00178">
    <property type="entry name" value="AA_TRNA_LIGASE_I"/>
    <property type="match status" value="1"/>
</dbReference>
<dbReference type="PROSITE" id="PS50886">
    <property type="entry name" value="TRBD"/>
    <property type="match status" value="1"/>
</dbReference>
<accession>Q74MZ1</accession>
<evidence type="ECO:0000250" key="1"/>
<evidence type="ECO:0000255" key="2">
    <source>
        <dbReference type="PROSITE-ProRule" id="PRU00209"/>
    </source>
</evidence>
<evidence type="ECO:0000305" key="3"/>
<evidence type="ECO:0007829" key="4">
    <source>
        <dbReference type="PDB" id="5H34"/>
    </source>
</evidence>
<name>SYM_NANEQ</name>